<organism>
    <name type="scientific">Dechloromonas aromatica (strain RCB)</name>
    <dbReference type="NCBI Taxonomy" id="159087"/>
    <lineage>
        <taxon>Bacteria</taxon>
        <taxon>Pseudomonadati</taxon>
        <taxon>Pseudomonadota</taxon>
        <taxon>Betaproteobacteria</taxon>
        <taxon>Rhodocyclales</taxon>
        <taxon>Azonexaceae</taxon>
        <taxon>Dechloromonas</taxon>
    </lineage>
</organism>
<feature type="chain" id="PRO_0000233468" description="Small ribosomal subunit protein uS17">
    <location>
        <begin position="1"/>
        <end position="88"/>
    </location>
</feature>
<dbReference type="EMBL" id="CP000089">
    <property type="protein sequence ID" value="AAZ45087.1"/>
    <property type="molecule type" value="Genomic_DNA"/>
</dbReference>
<dbReference type="SMR" id="Q47J94"/>
<dbReference type="STRING" id="159087.Daro_0328"/>
<dbReference type="KEGG" id="dar:Daro_0328"/>
<dbReference type="eggNOG" id="COG0186">
    <property type="taxonomic scope" value="Bacteria"/>
</dbReference>
<dbReference type="HOGENOM" id="CLU_073626_1_1_4"/>
<dbReference type="OrthoDB" id="9811714at2"/>
<dbReference type="GO" id="GO:0022627">
    <property type="term" value="C:cytosolic small ribosomal subunit"/>
    <property type="evidence" value="ECO:0007669"/>
    <property type="project" value="TreeGrafter"/>
</dbReference>
<dbReference type="GO" id="GO:0019843">
    <property type="term" value="F:rRNA binding"/>
    <property type="evidence" value="ECO:0007669"/>
    <property type="project" value="UniProtKB-UniRule"/>
</dbReference>
<dbReference type="GO" id="GO:0003735">
    <property type="term" value="F:structural constituent of ribosome"/>
    <property type="evidence" value="ECO:0007669"/>
    <property type="project" value="InterPro"/>
</dbReference>
<dbReference type="GO" id="GO:0006412">
    <property type="term" value="P:translation"/>
    <property type="evidence" value="ECO:0007669"/>
    <property type="project" value="UniProtKB-UniRule"/>
</dbReference>
<dbReference type="CDD" id="cd00364">
    <property type="entry name" value="Ribosomal_uS17"/>
    <property type="match status" value="1"/>
</dbReference>
<dbReference type="Gene3D" id="2.40.50.140">
    <property type="entry name" value="Nucleic acid-binding proteins"/>
    <property type="match status" value="1"/>
</dbReference>
<dbReference type="HAMAP" id="MF_01345_B">
    <property type="entry name" value="Ribosomal_uS17_B"/>
    <property type="match status" value="1"/>
</dbReference>
<dbReference type="InterPro" id="IPR012340">
    <property type="entry name" value="NA-bd_OB-fold"/>
</dbReference>
<dbReference type="InterPro" id="IPR000266">
    <property type="entry name" value="Ribosomal_uS17"/>
</dbReference>
<dbReference type="InterPro" id="IPR019984">
    <property type="entry name" value="Ribosomal_uS17_bact/chlr"/>
</dbReference>
<dbReference type="InterPro" id="IPR019979">
    <property type="entry name" value="Ribosomal_uS17_CS"/>
</dbReference>
<dbReference type="NCBIfam" id="NF004123">
    <property type="entry name" value="PRK05610.1"/>
    <property type="match status" value="1"/>
</dbReference>
<dbReference type="NCBIfam" id="TIGR03635">
    <property type="entry name" value="uS17_bact"/>
    <property type="match status" value="1"/>
</dbReference>
<dbReference type="PANTHER" id="PTHR10744">
    <property type="entry name" value="40S RIBOSOMAL PROTEIN S11 FAMILY MEMBER"/>
    <property type="match status" value="1"/>
</dbReference>
<dbReference type="PANTHER" id="PTHR10744:SF1">
    <property type="entry name" value="SMALL RIBOSOMAL SUBUNIT PROTEIN US17M"/>
    <property type="match status" value="1"/>
</dbReference>
<dbReference type="Pfam" id="PF00366">
    <property type="entry name" value="Ribosomal_S17"/>
    <property type="match status" value="1"/>
</dbReference>
<dbReference type="PRINTS" id="PR00973">
    <property type="entry name" value="RIBOSOMALS17"/>
</dbReference>
<dbReference type="SUPFAM" id="SSF50249">
    <property type="entry name" value="Nucleic acid-binding proteins"/>
    <property type="match status" value="1"/>
</dbReference>
<dbReference type="PROSITE" id="PS00056">
    <property type="entry name" value="RIBOSOMAL_S17"/>
    <property type="match status" value="1"/>
</dbReference>
<gene>
    <name evidence="1" type="primary">rpsQ</name>
    <name type="ordered locus">Daro_0328</name>
</gene>
<protein>
    <recommendedName>
        <fullName evidence="1">Small ribosomal subunit protein uS17</fullName>
    </recommendedName>
    <alternativeName>
        <fullName evidence="2">30S ribosomal protein S17</fullName>
    </alternativeName>
</protein>
<name>RS17_DECAR</name>
<reference key="1">
    <citation type="journal article" date="2009" name="BMC Genomics">
        <title>Metabolic analysis of the soil microbe Dechloromonas aromatica str. RCB: indications of a surprisingly complex life-style and cryptic anaerobic pathways for aromatic degradation.</title>
        <authorList>
            <person name="Salinero K.K."/>
            <person name="Keller K."/>
            <person name="Feil W.S."/>
            <person name="Feil H."/>
            <person name="Trong S."/>
            <person name="Di Bartolo G."/>
            <person name="Lapidus A."/>
        </authorList>
    </citation>
    <scope>NUCLEOTIDE SEQUENCE [LARGE SCALE GENOMIC DNA]</scope>
    <source>
        <strain>RCB</strain>
    </source>
</reference>
<sequence>MSESSSIKRTLIGRVVSDKMDKTVTVLVERKVKHPMYGKVMVRSKKYHAHNEGNSAKAGDLVEIVETRPVSRTKTWAVTSVLEKAIVV</sequence>
<accession>Q47J94</accession>
<evidence type="ECO:0000255" key="1">
    <source>
        <dbReference type="HAMAP-Rule" id="MF_01345"/>
    </source>
</evidence>
<evidence type="ECO:0000305" key="2"/>
<comment type="function">
    <text evidence="1">One of the primary rRNA binding proteins, it binds specifically to the 5'-end of 16S ribosomal RNA.</text>
</comment>
<comment type="subunit">
    <text evidence="1">Part of the 30S ribosomal subunit.</text>
</comment>
<comment type="similarity">
    <text evidence="1">Belongs to the universal ribosomal protein uS17 family.</text>
</comment>
<proteinExistence type="inferred from homology"/>
<keyword id="KW-0687">Ribonucleoprotein</keyword>
<keyword id="KW-0689">Ribosomal protein</keyword>
<keyword id="KW-0694">RNA-binding</keyword>
<keyword id="KW-0699">rRNA-binding</keyword>